<proteinExistence type="inferred from homology"/>
<dbReference type="EC" id="2.7.1.148" evidence="1"/>
<dbReference type="EMBL" id="AE008691">
    <property type="protein sequence ID" value="AAM25683.1"/>
    <property type="molecule type" value="Genomic_DNA"/>
</dbReference>
<dbReference type="RefSeq" id="WP_011026560.1">
    <property type="nucleotide sequence ID" value="NC_003869.1"/>
</dbReference>
<dbReference type="SMR" id="Q8R765"/>
<dbReference type="STRING" id="273068.TTE2559"/>
<dbReference type="KEGG" id="tte:TTE2559"/>
<dbReference type="eggNOG" id="COG1947">
    <property type="taxonomic scope" value="Bacteria"/>
</dbReference>
<dbReference type="HOGENOM" id="CLU_053057_1_1_9"/>
<dbReference type="OrthoDB" id="9809438at2"/>
<dbReference type="UniPathway" id="UPA00056">
    <property type="reaction ID" value="UER00094"/>
</dbReference>
<dbReference type="Proteomes" id="UP000000555">
    <property type="component" value="Chromosome"/>
</dbReference>
<dbReference type="GO" id="GO:0050515">
    <property type="term" value="F:4-(cytidine 5'-diphospho)-2-C-methyl-D-erythritol kinase activity"/>
    <property type="evidence" value="ECO:0007669"/>
    <property type="project" value="UniProtKB-UniRule"/>
</dbReference>
<dbReference type="GO" id="GO:0005524">
    <property type="term" value="F:ATP binding"/>
    <property type="evidence" value="ECO:0007669"/>
    <property type="project" value="UniProtKB-UniRule"/>
</dbReference>
<dbReference type="GO" id="GO:0019288">
    <property type="term" value="P:isopentenyl diphosphate biosynthetic process, methylerythritol 4-phosphate pathway"/>
    <property type="evidence" value="ECO:0007669"/>
    <property type="project" value="UniProtKB-UniRule"/>
</dbReference>
<dbReference type="GO" id="GO:0016114">
    <property type="term" value="P:terpenoid biosynthetic process"/>
    <property type="evidence" value="ECO:0007669"/>
    <property type="project" value="InterPro"/>
</dbReference>
<dbReference type="Gene3D" id="3.30.230.10">
    <property type="match status" value="1"/>
</dbReference>
<dbReference type="Gene3D" id="3.30.70.890">
    <property type="entry name" value="GHMP kinase, C-terminal domain"/>
    <property type="match status" value="1"/>
</dbReference>
<dbReference type="HAMAP" id="MF_00061">
    <property type="entry name" value="IspE"/>
    <property type="match status" value="1"/>
</dbReference>
<dbReference type="InterPro" id="IPR013750">
    <property type="entry name" value="GHMP_kinase_C_dom"/>
</dbReference>
<dbReference type="InterPro" id="IPR036554">
    <property type="entry name" value="GHMP_kinase_C_sf"/>
</dbReference>
<dbReference type="InterPro" id="IPR006204">
    <property type="entry name" value="GHMP_kinase_N_dom"/>
</dbReference>
<dbReference type="InterPro" id="IPR004424">
    <property type="entry name" value="IspE"/>
</dbReference>
<dbReference type="InterPro" id="IPR020568">
    <property type="entry name" value="Ribosomal_Su5_D2-typ_SF"/>
</dbReference>
<dbReference type="InterPro" id="IPR014721">
    <property type="entry name" value="Ribsml_uS5_D2-typ_fold_subgr"/>
</dbReference>
<dbReference type="NCBIfam" id="TIGR00154">
    <property type="entry name" value="ispE"/>
    <property type="match status" value="1"/>
</dbReference>
<dbReference type="NCBIfam" id="NF011202">
    <property type="entry name" value="PRK14608.1"/>
    <property type="match status" value="1"/>
</dbReference>
<dbReference type="PANTHER" id="PTHR43527">
    <property type="entry name" value="4-DIPHOSPHOCYTIDYL-2-C-METHYL-D-ERYTHRITOL KINASE, CHLOROPLASTIC"/>
    <property type="match status" value="1"/>
</dbReference>
<dbReference type="PANTHER" id="PTHR43527:SF2">
    <property type="entry name" value="4-DIPHOSPHOCYTIDYL-2-C-METHYL-D-ERYTHRITOL KINASE, CHLOROPLASTIC"/>
    <property type="match status" value="1"/>
</dbReference>
<dbReference type="Pfam" id="PF08544">
    <property type="entry name" value="GHMP_kinases_C"/>
    <property type="match status" value="1"/>
</dbReference>
<dbReference type="Pfam" id="PF00288">
    <property type="entry name" value="GHMP_kinases_N"/>
    <property type="match status" value="1"/>
</dbReference>
<dbReference type="PIRSF" id="PIRSF010376">
    <property type="entry name" value="IspE"/>
    <property type="match status" value="1"/>
</dbReference>
<dbReference type="SUPFAM" id="SSF55060">
    <property type="entry name" value="GHMP Kinase, C-terminal domain"/>
    <property type="match status" value="1"/>
</dbReference>
<dbReference type="SUPFAM" id="SSF54211">
    <property type="entry name" value="Ribosomal protein S5 domain 2-like"/>
    <property type="match status" value="1"/>
</dbReference>
<keyword id="KW-0067">ATP-binding</keyword>
<keyword id="KW-0414">Isoprene biosynthesis</keyword>
<keyword id="KW-0418">Kinase</keyword>
<keyword id="KW-0547">Nucleotide-binding</keyword>
<keyword id="KW-1185">Reference proteome</keyword>
<keyword id="KW-0808">Transferase</keyword>
<name>ISPE_CALS4</name>
<evidence type="ECO:0000255" key="1">
    <source>
        <dbReference type="HAMAP-Rule" id="MF_00061"/>
    </source>
</evidence>
<gene>
    <name evidence="1" type="primary">ispE</name>
    <name type="ordered locus">TTE2559</name>
</gene>
<sequence length="287" mass="31917">MKLRIKAYAKVNLTLDVLSKREDGYHEILSVMQSIDLADVIEFEKAKEILFECDHERVPKGEENLIMKAFNAIRDRYFLNEGIKIKLFKNIPLAAGLAGGSADAAATIVALDKLWNLNLTEKEMEEIASEVGSDVPFCLKGGTKLASGRGEKLQDLEGIPLNLLLVKPDLEISTKEVYTEWDNSGFKSLNSTFLFVEALKKGDLLEIARNISNDLERVTSQKYRVIEDIKKSLIEKGALSASMTGSGPTVYGVFNDVEKLVRAYHDLKGVYPFVAISKTIDKGLEIL</sequence>
<accession>Q8R765</accession>
<comment type="function">
    <text evidence="1">Catalyzes the phosphorylation of the position 2 hydroxy group of 4-diphosphocytidyl-2C-methyl-D-erythritol.</text>
</comment>
<comment type="catalytic activity">
    <reaction evidence="1">
        <text>4-CDP-2-C-methyl-D-erythritol + ATP = 4-CDP-2-C-methyl-D-erythritol 2-phosphate + ADP + H(+)</text>
        <dbReference type="Rhea" id="RHEA:18437"/>
        <dbReference type="ChEBI" id="CHEBI:15378"/>
        <dbReference type="ChEBI" id="CHEBI:30616"/>
        <dbReference type="ChEBI" id="CHEBI:57823"/>
        <dbReference type="ChEBI" id="CHEBI:57919"/>
        <dbReference type="ChEBI" id="CHEBI:456216"/>
        <dbReference type="EC" id="2.7.1.148"/>
    </reaction>
</comment>
<comment type="pathway">
    <text evidence="1">Isoprenoid biosynthesis; isopentenyl diphosphate biosynthesis via DXP pathway; isopentenyl diphosphate from 1-deoxy-D-xylulose 5-phosphate: step 3/6.</text>
</comment>
<comment type="similarity">
    <text evidence="1">Belongs to the GHMP kinase family. IspE subfamily.</text>
</comment>
<protein>
    <recommendedName>
        <fullName evidence="1">4-diphosphocytidyl-2-C-methyl-D-erythritol kinase</fullName>
        <shortName evidence="1">CMK</shortName>
        <ecNumber evidence="1">2.7.1.148</ecNumber>
    </recommendedName>
    <alternativeName>
        <fullName evidence="1">4-(cytidine-5'-diphospho)-2-C-methyl-D-erythritol kinase</fullName>
    </alternativeName>
</protein>
<reference key="1">
    <citation type="journal article" date="2002" name="Genome Res.">
        <title>A complete sequence of the T. tengcongensis genome.</title>
        <authorList>
            <person name="Bao Q."/>
            <person name="Tian Y."/>
            <person name="Li W."/>
            <person name="Xu Z."/>
            <person name="Xuan Z."/>
            <person name="Hu S."/>
            <person name="Dong W."/>
            <person name="Yang J."/>
            <person name="Chen Y."/>
            <person name="Xue Y."/>
            <person name="Xu Y."/>
            <person name="Lai X."/>
            <person name="Huang L."/>
            <person name="Dong X."/>
            <person name="Ma Y."/>
            <person name="Ling L."/>
            <person name="Tan H."/>
            <person name="Chen R."/>
            <person name="Wang J."/>
            <person name="Yu J."/>
            <person name="Yang H."/>
        </authorList>
    </citation>
    <scope>NUCLEOTIDE SEQUENCE [LARGE SCALE GENOMIC DNA]</scope>
    <source>
        <strain>DSM 15242 / JCM 11007 / NBRC 100824 / MB4</strain>
    </source>
</reference>
<feature type="chain" id="PRO_0000189280" description="4-diphosphocytidyl-2-C-methyl-D-erythritol kinase">
    <location>
        <begin position="1"/>
        <end position="287"/>
    </location>
</feature>
<feature type="active site" evidence="1">
    <location>
        <position position="10"/>
    </location>
</feature>
<feature type="active site" evidence="1">
    <location>
        <position position="134"/>
    </location>
</feature>
<feature type="binding site" evidence="1">
    <location>
        <begin position="92"/>
        <end position="102"/>
    </location>
    <ligand>
        <name>ATP</name>
        <dbReference type="ChEBI" id="CHEBI:30616"/>
    </ligand>
</feature>
<organism>
    <name type="scientific">Caldanaerobacter subterraneus subsp. tengcongensis (strain DSM 15242 / JCM 11007 / NBRC 100824 / MB4)</name>
    <name type="common">Thermoanaerobacter tengcongensis</name>
    <dbReference type="NCBI Taxonomy" id="273068"/>
    <lineage>
        <taxon>Bacteria</taxon>
        <taxon>Bacillati</taxon>
        <taxon>Bacillota</taxon>
        <taxon>Clostridia</taxon>
        <taxon>Thermoanaerobacterales</taxon>
        <taxon>Thermoanaerobacteraceae</taxon>
        <taxon>Caldanaerobacter</taxon>
    </lineage>
</organism>